<organismHost>
    <name type="scientific">Oryctolagus cuniculus</name>
    <name type="common">Rabbit</name>
    <dbReference type="NCBI Taxonomy" id="9986"/>
</organismHost>
<accession>Q6RZB9</accession>
<evidence type="ECO:0000305" key="1"/>
<protein>
    <recommendedName>
        <fullName>Kelch repeat protein B10</fullName>
    </recommendedName>
</protein>
<gene>
    <name type="ordered locus">RPXV172</name>
</gene>
<sequence length="166" mass="18911">MDSGIYETPINYKKSNVSAVSVNNTIFVTGGLFINNSNSTIVVNNMEKLDIYKDKQWSIIEMPMARVYHGIDSTFGMLYFAGGLSVTEQYGNLEKNNEISCYNPRTNKWFDISYTIYKISISSLCKLNNVFYVFSKDIGYVEKYDGAWKLVHDRLPAIKALSTSPY</sequence>
<comment type="similarity">
    <text evidence="1">Belongs to the poxviruses Kelch family.</text>
</comment>
<feature type="chain" id="PRO_0000119156" description="Kelch repeat protein B10">
    <location>
        <begin position="1"/>
        <end position="166"/>
    </location>
</feature>
<feature type="repeat" description="Kelch 1">
    <location>
        <begin position="25"/>
        <end position="76"/>
    </location>
</feature>
<feature type="repeat" description="Kelch 2">
    <location>
        <begin position="77"/>
        <end position="129"/>
    </location>
</feature>
<name>VB10_RABPU</name>
<organism>
    <name type="scientific">Rabbitpox virus (strain Utrecht)</name>
    <name type="common">RPV</name>
    <dbReference type="NCBI Taxonomy" id="45417"/>
    <lineage>
        <taxon>Viruses</taxon>
        <taxon>Varidnaviria</taxon>
        <taxon>Bamfordvirae</taxon>
        <taxon>Nucleocytoviricota</taxon>
        <taxon>Pokkesviricetes</taxon>
        <taxon>Chitovirales</taxon>
        <taxon>Poxviridae</taxon>
        <taxon>Chordopoxvirinae</taxon>
        <taxon>Orthopoxvirus</taxon>
        <taxon>Vaccinia virus</taxon>
    </lineage>
</organism>
<dbReference type="EMBL" id="AY484669">
    <property type="protein sequence ID" value="AAS49885.1"/>
    <property type="molecule type" value="Genomic_DNA"/>
</dbReference>
<dbReference type="SMR" id="Q6RZB9"/>
<dbReference type="Proteomes" id="UP000166173">
    <property type="component" value="Segment"/>
</dbReference>
<dbReference type="Gene3D" id="2.120.10.80">
    <property type="entry name" value="Kelch-type beta propeller"/>
    <property type="match status" value="1"/>
</dbReference>
<dbReference type="InterPro" id="IPR015915">
    <property type="entry name" value="Kelch-typ_b-propeller"/>
</dbReference>
<dbReference type="PANTHER" id="PTHR24412:SF163">
    <property type="entry name" value="CALICIN"/>
    <property type="match status" value="1"/>
</dbReference>
<dbReference type="PANTHER" id="PTHR24412">
    <property type="entry name" value="KELCH PROTEIN"/>
    <property type="match status" value="1"/>
</dbReference>
<dbReference type="SUPFAM" id="SSF117281">
    <property type="entry name" value="Kelch motif"/>
    <property type="match status" value="1"/>
</dbReference>
<proteinExistence type="inferred from homology"/>
<keyword id="KW-0880">Kelch repeat</keyword>
<keyword id="KW-0677">Repeat</keyword>
<reference key="1">
    <citation type="journal article" date="2005" name="J. Gen. Virol.">
        <title>Complete coding sequences of the rabbitpox virus genome.</title>
        <authorList>
            <person name="Li G."/>
            <person name="Chen N."/>
            <person name="Roper R.L."/>
            <person name="Feng Z."/>
            <person name="Hunter A.L."/>
            <person name="Danila M."/>
            <person name="Lefkowitz E.J."/>
            <person name="Buller R.M.L."/>
            <person name="Upton C."/>
        </authorList>
    </citation>
    <scope>NUCLEOTIDE SEQUENCE [LARGE SCALE GENOMIC DNA]</scope>
</reference>